<evidence type="ECO:0000255" key="1">
    <source>
        <dbReference type="HAMAP-Rule" id="MF_00382"/>
    </source>
</evidence>
<evidence type="ECO:0000305" key="2"/>
<comment type="function">
    <text evidence="1">Binds directly to 23S ribosomal RNA and is necessary for the in vitro assembly process of the 50S ribosomal subunit. It is not involved in the protein synthesizing functions of that subunit.</text>
</comment>
<comment type="similarity">
    <text evidence="1">Belongs to the bacterial ribosomal protein bL20 family.</text>
</comment>
<gene>
    <name evidence="1" type="primary">rplT</name>
    <name type="ordered locus">Sare_1877</name>
</gene>
<organism>
    <name type="scientific">Salinispora arenicola (strain CNS-205)</name>
    <dbReference type="NCBI Taxonomy" id="391037"/>
    <lineage>
        <taxon>Bacteria</taxon>
        <taxon>Bacillati</taxon>
        <taxon>Actinomycetota</taxon>
        <taxon>Actinomycetes</taxon>
        <taxon>Micromonosporales</taxon>
        <taxon>Micromonosporaceae</taxon>
        <taxon>Salinispora</taxon>
    </lineage>
</organism>
<dbReference type="EMBL" id="CP000850">
    <property type="protein sequence ID" value="ABV97762.1"/>
    <property type="molecule type" value="Genomic_DNA"/>
</dbReference>
<dbReference type="SMR" id="A8LY45"/>
<dbReference type="STRING" id="391037.Sare_1877"/>
<dbReference type="KEGG" id="saq:Sare_1877"/>
<dbReference type="PATRIC" id="fig|391037.6.peg.1905"/>
<dbReference type="eggNOG" id="COG0292">
    <property type="taxonomic scope" value="Bacteria"/>
</dbReference>
<dbReference type="HOGENOM" id="CLU_123265_0_0_11"/>
<dbReference type="OrthoDB" id="9808966at2"/>
<dbReference type="GO" id="GO:1990904">
    <property type="term" value="C:ribonucleoprotein complex"/>
    <property type="evidence" value="ECO:0007669"/>
    <property type="project" value="UniProtKB-KW"/>
</dbReference>
<dbReference type="GO" id="GO:0005840">
    <property type="term" value="C:ribosome"/>
    <property type="evidence" value="ECO:0007669"/>
    <property type="project" value="UniProtKB-KW"/>
</dbReference>
<dbReference type="GO" id="GO:0019843">
    <property type="term" value="F:rRNA binding"/>
    <property type="evidence" value="ECO:0007669"/>
    <property type="project" value="UniProtKB-UniRule"/>
</dbReference>
<dbReference type="GO" id="GO:0003735">
    <property type="term" value="F:structural constituent of ribosome"/>
    <property type="evidence" value="ECO:0007669"/>
    <property type="project" value="InterPro"/>
</dbReference>
<dbReference type="GO" id="GO:0000027">
    <property type="term" value="P:ribosomal large subunit assembly"/>
    <property type="evidence" value="ECO:0007669"/>
    <property type="project" value="UniProtKB-UniRule"/>
</dbReference>
<dbReference type="GO" id="GO:0006412">
    <property type="term" value="P:translation"/>
    <property type="evidence" value="ECO:0007669"/>
    <property type="project" value="InterPro"/>
</dbReference>
<dbReference type="CDD" id="cd07026">
    <property type="entry name" value="Ribosomal_L20"/>
    <property type="match status" value="1"/>
</dbReference>
<dbReference type="FunFam" id="1.10.1900.20:FF:000001">
    <property type="entry name" value="50S ribosomal protein L20"/>
    <property type="match status" value="1"/>
</dbReference>
<dbReference type="Gene3D" id="6.10.160.10">
    <property type="match status" value="1"/>
</dbReference>
<dbReference type="Gene3D" id="1.10.1900.20">
    <property type="entry name" value="Ribosomal protein L20"/>
    <property type="match status" value="1"/>
</dbReference>
<dbReference type="HAMAP" id="MF_00382">
    <property type="entry name" value="Ribosomal_bL20"/>
    <property type="match status" value="1"/>
</dbReference>
<dbReference type="InterPro" id="IPR005813">
    <property type="entry name" value="Ribosomal_bL20"/>
</dbReference>
<dbReference type="InterPro" id="IPR049946">
    <property type="entry name" value="RIBOSOMAL_L20_CS"/>
</dbReference>
<dbReference type="InterPro" id="IPR035566">
    <property type="entry name" value="Ribosomal_protein_bL20_C"/>
</dbReference>
<dbReference type="NCBIfam" id="TIGR01032">
    <property type="entry name" value="rplT_bact"/>
    <property type="match status" value="1"/>
</dbReference>
<dbReference type="PANTHER" id="PTHR10986">
    <property type="entry name" value="39S RIBOSOMAL PROTEIN L20"/>
    <property type="match status" value="1"/>
</dbReference>
<dbReference type="Pfam" id="PF00453">
    <property type="entry name" value="Ribosomal_L20"/>
    <property type="match status" value="1"/>
</dbReference>
<dbReference type="PRINTS" id="PR00062">
    <property type="entry name" value="RIBOSOMALL20"/>
</dbReference>
<dbReference type="SUPFAM" id="SSF74731">
    <property type="entry name" value="Ribosomal protein L20"/>
    <property type="match status" value="1"/>
</dbReference>
<dbReference type="PROSITE" id="PS00937">
    <property type="entry name" value="RIBOSOMAL_L20"/>
    <property type="match status" value="1"/>
</dbReference>
<feature type="chain" id="PRO_1000080090" description="Large ribosomal subunit protein bL20">
    <location>
        <begin position="1"/>
        <end position="130"/>
    </location>
</feature>
<proteinExistence type="inferred from homology"/>
<sequence length="130" mass="14386">MARVKRAVNAQKKRRTLLATASGYRGQRSRLYRKAKEQVLHSMQYSYRDRRDRKGDFRQLWIQRINAGARANGLTYNRLIQGLKLAGVEVDRKILADLAVNDAAAFAAIVELARAAVAEQGTGGAASQAA</sequence>
<name>RL20_SALAI</name>
<protein>
    <recommendedName>
        <fullName evidence="1">Large ribosomal subunit protein bL20</fullName>
    </recommendedName>
    <alternativeName>
        <fullName evidence="2">50S ribosomal protein L20</fullName>
    </alternativeName>
</protein>
<reference key="1">
    <citation type="submission" date="2007-10" db="EMBL/GenBank/DDBJ databases">
        <title>Complete sequence of Salinispora arenicola CNS-205.</title>
        <authorList>
            <consortium name="US DOE Joint Genome Institute"/>
            <person name="Copeland A."/>
            <person name="Lucas S."/>
            <person name="Lapidus A."/>
            <person name="Barry K."/>
            <person name="Glavina del Rio T."/>
            <person name="Dalin E."/>
            <person name="Tice H."/>
            <person name="Pitluck S."/>
            <person name="Foster B."/>
            <person name="Schmutz J."/>
            <person name="Larimer F."/>
            <person name="Land M."/>
            <person name="Hauser L."/>
            <person name="Kyrpides N."/>
            <person name="Ivanova N."/>
            <person name="Jensen P.R."/>
            <person name="Moore B.S."/>
            <person name="Penn K."/>
            <person name="Jenkins C."/>
            <person name="Udwary D."/>
            <person name="Xiang L."/>
            <person name="Gontang E."/>
            <person name="Richardson P."/>
        </authorList>
    </citation>
    <scope>NUCLEOTIDE SEQUENCE [LARGE SCALE GENOMIC DNA]</scope>
    <source>
        <strain>CNS-205</strain>
    </source>
</reference>
<keyword id="KW-0687">Ribonucleoprotein</keyword>
<keyword id="KW-0689">Ribosomal protein</keyword>
<keyword id="KW-0694">RNA-binding</keyword>
<keyword id="KW-0699">rRNA-binding</keyword>
<accession>A8LY45</accession>